<organism>
    <name type="scientific">Bradyrhizobium diazoefficiens (strain JCM 10833 / BCRC 13528 / IAM 13628 / NBRC 14792 / USDA 110)</name>
    <dbReference type="NCBI Taxonomy" id="224911"/>
    <lineage>
        <taxon>Bacteria</taxon>
        <taxon>Pseudomonadati</taxon>
        <taxon>Pseudomonadota</taxon>
        <taxon>Alphaproteobacteria</taxon>
        <taxon>Hyphomicrobiales</taxon>
        <taxon>Nitrobacteraceae</taxon>
        <taxon>Bradyrhizobium</taxon>
    </lineage>
</organism>
<accession>Q89WN9</accession>
<sequence length="199" mass="21292">MRILGLTGSIGMGKSTTAKLFAEAGVPVYDADAAVHQLYEGEAAPAIEAAFPGTTANGKVDRPKLSARVVHDPAAIKQLEQIVHPMLGASRQKFFADAEAANAPVVVLDIPLLFETGGEKRVDAVVVVSTSPELQRERVLARGTMDEAKLNAIIAKQTPDAEKRKRADFVVDTSHGLEPVRAQIAHILAEVVKMPQRRA</sequence>
<keyword id="KW-0067">ATP-binding</keyword>
<keyword id="KW-0173">Coenzyme A biosynthesis</keyword>
<keyword id="KW-0963">Cytoplasm</keyword>
<keyword id="KW-0418">Kinase</keyword>
<keyword id="KW-0547">Nucleotide-binding</keyword>
<keyword id="KW-1185">Reference proteome</keyword>
<keyword id="KW-0808">Transferase</keyword>
<name>COAE_BRADU</name>
<dbReference type="EC" id="2.7.1.24" evidence="1"/>
<dbReference type="EMBL" id="BA000040">
    <property type="protein sequence ID" value="BAC45904.1"/>
    <property type="molecule type" value="Genomic_DNA"/>
</dbReference>
<dbReference type="RefSeq" id="NP_767279.1">
    <property type="nucleotide sequence ID" value="NC_004463.1"/>
</dbReference>
<dbReference type="RefSeq" id="WP_011083466.1">
    <property type="nucleotide sequence ID" value="NC_004463.1"/>
</dbReference>
<dbReference type="SMR" id="Q89WN9"/>
<dbReference type="FunCoup" id="Q89WN9">
    <property type="interactions" value="534"/>
</dbReference>
<dbReference type="STRING" id="224911.AAV28_00030"/>
<dbReference type="EnsemblBacteria" id="BAC45904">
    <property type="protein sequence ID" value="BAC45904"/>
    <property type="gene ID" value="BAC45904"/>
</dbReference>
<dbReference type="GeneID" id="46487912"/>
<dbReference type="KEGG" id="bja:blr0639"/>
<dbReference type="PATRIC" id="fig|224911.44.peg.8"/>
<dbReference type="eggNOG" id="COG0237">
    <property type="taxonomic scope" value="Bacteria"/>
</dbReference>
<dbReference type="HOGENOM" id="CLU_057180_3_0_5"/>
<dbReference type="InParanoid" id="Q89WN9"/>
<dbReference type="OrthoDB" id="9812943at2"/>
<dbReference type="PhylomeDB" id="Q89WN9"/>
<dbReference type="UniPathway" id="UPA00241">
    <property type="reaction ID" value="UER00356"/>
</dbReference>
<dbReference type="Proteomes" id="UP000002526">
    <property type="component" value="Chromosome"/>
</dbReference>
<dbReference type="GO" id="GO:0005737">
    <property type="term" value="C:cytoplasm"/>
    <property type="evidence" value="ECO:0007669"/>
    <property type="project" value="UniProtKB-SubCell"/>
</dbReference>
<dbReference type="GO" id="GO:0005524">
    <property type="term" value="F:ATP binding"/>
    <property type="evidence" value="ECO:0007669"/>
    <property type="project" value="UniProtKB-UniRule"/>
</dbReference>
<dbReference type="GO" id="GO:0004140">
    <property type="term" value="F:dephospho-CoA kinase activity"/>
    <property type="evidence" value="ECO:0000318"/>
    <property type="project" value="GO_Central"/>
</dbReference>
<dbReference type="GO" id="GO:0015937">
    <property type="term" value="P:coenzyme A biosynthetic process"/>
    <property type="evidence" value="ECO:0000318"/>
    <property type="project" value="GO_Central"/>
</dbReference>
<dbReference type="CDD" id="cd02022">
    <property type="entry name" value="DPCK"/>
    <property type="match status" value="1"/>
</dbReference>
<dbReference type="FunFam" id="3.40.50.300:FF:000991">
    <property type="entry name" value="Dephospho-CoA kinase"/>
    <property type="match status" value="1"/>
</dbReference>
<dbReference type="Gene3D" id="3.40.50.300">
    <property type="entry name" value="P-loop containing nucleotide triphosphate hydrolases"/>
    <property type="match status" value="1"/>
</dbReference>
<dbReference type="HAMAP" id="MF_00376">
    <property type="entry name" value="Dephospho_CoA_kinase"/>
    <property type="match status" value="1"/>
</dbReference>
<dbReference type="InterPro" id="IPR001977">
    <property type="entry name" value="Depp_CoAkinase"/>
</dbReference>
<dbReference type="InterPro" id="IPR027417">
    <property type="entry name" value="P-loop_NTPase"/>
</dbReference>
<dbReference type="NCBIfam" id="TIGR00152">
    <property type="entry name" value="dephospho-CoA kinase"/>
    <property type="match status" value="1"/>
</dbReference>
<dbReference type="PANTHER" id="PTHR10695:SF46">
    <property type="entry name" value="BIFUNCTIONAL COENZYME A SYNTHASE-RELATED"/>
    <property type="match status" value="1"/>
</dbReference>
<dbReference type="PANTHER" id="PTHR10695">
    <property type="entry name" value="DEPHOSPHO-COA KINASE-RELATED"/>
    <property type="match status" value="1"/>
</dbReference>
<dbReference type="Pfam" id="PF01121">
    <property type="entry name" value="CoaE"/>
    <property type="match status" value="1"/>
</dbReference>
<dbReference type="SUPFAM" id="SSF52540">
    <property type="entry name" value="P-loop containing nucleoside triphosphate hydrolases"/>
    <property type="match status" value="1"/>
</dbReference>
<dbReference type="PROSITE" id="PS51219">
    <property type="entry name" value="DPCK"/>
    <property type="match status" value="1"/>
</dbReference>
<proteinExistence type="inferred from homology"/>
<comment type="function">
    <text evidence="1">Catalyzes the phosphorylation of the 3'-hydroxyl group of dephosphocoenzyme A to form coenzyme A.</text>
</comment>
<comment type="catalytic activity">
    <reaction evidence="1">
        <text>3'-dephospho-CoA + ATP = ADP + CoA + H(+)</text>
        <dbReference type="Rhea" id="RHEA:18245"/>
        <dbReference type="ChEBI" id="CHEBI:15378"/>
        <dbReference type="ChEBI" id="CHEBI:30616"/>
        <dbReference type="ChEBI" id="CHEBI:57287"/>
        <dbReference type="ChEBI" id="CHEBI:57328"/>
        <dbReference type="ChEBI" id="CHEBI:456216"/>
        <dbReference type="EC" id="2.7.1.24"/>
    </reaction>
</comment>
<comment type="pathway">
    <text evidence="1">Cofactor biosynthesis; coenzyme A biosynthesis; CoA from (R)-pantothenate: step 5/5.</text>
</comment>
<comment type="subcellular location">
    <subcellularLocation>
        <location evidence="1">Cytoplasm</location>
    </subcellularLocation>
</comment>
<comment type="similarity">
    <text evidence="1">Belongs to the CoaE family.</text>
</comment>
<reference key="1">
    <citation type="journal article" date="2002" name="DNA Res.">
        <title>Complete genomic sequence of nitrogen-fixing symbiotic bacterium Bradyrhizobium japonicum USDA110.</title>
        <authorList>
            <person name="Kaneko T."/>
            <person name="Nakamura Y."/>
            <person name="Sato S."/>
            <person name="Minamisawa K."/>
            <person name="Uchiumi T."/>
            <person name="Sasamoto S."/>
            <person name="Watanabe A."/>
            <person name="Idesawa K."/>
            <person name="Iriguchi M."/>
            <person name="Kawashima K."/>
            <person name="Kohara M."/>
            <person name="Matsumoto M."/>
            <person name="Shimpo S."/>
            <person name="Tsuruoka H."/>
            <person name="Wada T."/>
            <person name="Yamada M."/>
            <person name="Tabata S."/>
        </authorList>
    </citation>
    <scope>NUCLEOTIDE SEQUENCE [LARGE SCALE GENOMIC DNA]</scope>
    <source>
        <strain>JCM 10833 / BCRC 13528 / IAM 13628 / NBRC 14792 / USDA 110</strain>
    </source>
</reference>
<feature type="chain" id="PRO_0000172916" description="Dephospho-CoA kinase">
    <location>
        <begin position="1"/>
        <end position="199"/>
    </location>
</feature>
<feature type="domain" description="DPCK" evidence="1">
    <location>
        <begin position="3"/>
        <end position="199"/>
    </location>
</feature>
<feature type="binding site" evidence="1">
    <location>
        <begin position="11"/>
        <end position="16"/>
    </location>
    <ligand>
        <name>ATP</name>
        <dbReference type="ChEBI" id="CHEBI:30616"/>
    </ligand>
</feature>
<gene>
    <name evidence="1" type="primary">coaE</name>
    <name type="ordered locus">blr0639</name>
</gene>
<evidence type="ECO:0000255" key="1">
    <source>
        <dbReference type="HAMAP-Rule" id="MF_00376"/>
    </source>
</evidence>
<protein>
    <recommendedName>
        <fullName evidence="1">Dephospho-CoA kinase</fullName>
        <ecNumber evidence="1">2.7.1.24</ecNumber>
    </recommendedName>
    <alternativeName>
        <fullName evidence="1">Dephosphocoenzyme A kinase</fullName>
    </alternativeName>
</protein>